<organism>
    <name type="scientific">Staphylococcus aureus (strain USA300)</name>
    <dbReference type="NCBI Taxonomy" id="367830"/>
    <lineage>
        <taxon>Bacteria</taxon>
        <taxon>Bacillati</taxon>
        <taxon>Bacillota</taxon>
        <taxon>Bacilli</taxon>
        <taxon>Bacillales</taxon>
        <taxon>Staphylococcaceae</taxon>
        <taxon>Staphylococcus</taxon>
    </lineage>
</organism>
<dbReference type="EMBL" id="CP000255">
    <property type="protein sequence ID" value="ABD21191.1"/>
    <property type="molecule type" value="Genomic_DNA"/>
</dbReference>
<dbReference type="RefSeq" id="WP_000728949.1">
    <property type="nucleotide sequence ID" value="NZ_CP027476.1"/>
</dbReference>
<dbReference type="SMR" id="A0A0H2XFP1"/>
<dbReference type="KEGG" id="saa:SAUSA300_0279"/>
<dbReference type="HOGENOM" id="CLU_015018_0_0_9"/>
<dbReference type="OMA" id="MYNFYKP"/>
<dbReference type="Proteomes" id="UP000001939">
    <property type="component" value="Chromosome"/>
</dbReference>
<dbReference type="GO" id="GO:0005886">
    <property type="term" value="C:plasma membrane"/>
    <property type="evidence" value="ECO:0007669"/>
    <property type="project" value="UniProtKB-SubCell"/>
</dbReference>
<dbReference type="Gene3D" id="3.40.1710.10">
    <property type="entry name" value="abc type-2 transporter like domain"/>
    <property type="match status" value="1"/>
</dbReference>
<dbReference type="InterPro" id="IPR051328">
    <property type="entry name" value="T7SS_ABC-Transporter"/>
</dbReference>
<dbReference type="InterPro" id="IPR023838">
    <property type="entry name" value="T7SS_EsaA"/>
</dbReference>
<dbReference type="NCBIfam" id="TIGR03929">
    <property type="entry name" value="T7_esaA_Nterm"/>
    <property type="match status" value="1"/>
</dbReference>
<dbReference type="PANTHER" id="PTHR43077:SF10">
    <property type="entry name" value="TRANSPORT PERMEASE PROTEIN"/>
    <property type="match status" value="1"/>
</dbReference>
<dbReference type="PANTHER" id="PTHR43077">
    <property type="entry name" value="TRANSPORT PERMEASE YVFS-RELATED"/>
    <property type="match status" value="1"/>
</dbReference>
<evidence type="ECO:0000250" key="1">
    <source>
        <dbReference type="UniProtKB" id="Q2G188"/>
    </source>
</evidence>
<evidence type="ECO:0000255" key="2"/>
<evidence type="ECO:0000256" key="3">
    <source>
        <dbReference type="SAM" id="MobiDB-lite"/>
    </source>
</evidence>
<evidence type="ECO:0000269" key="4">
    <source>
    </source>
</evidence>
<evidence type="ECO:0000269" key="5">
    <source>
    </source>
</evidence>
<evidence type="ECO:0000303" key="6">
    <source>
    </source>
</evidence>
<evidence type="ECO:0000305" key="7"/>
<gene>
    <name evidence="6" type="primary">esaA</name>
    <name type="ordered locus">SAUSA300_0279</name>
</gene>
<accession>A0A0H2XFP1</accession>
<protein>
    <recommendedName>
        <fullName evidence="7">Type VII secretion system accessory factor EsaA</fullName>
    </recommendedName>
</protein>
<feature type="chain" id="PRO_0000448088" description="Type VII secretion system accessory factor EsaA">
    <location>
        <begin position="1"/>
        <end position="1009"/>
    </location>
</feature>
<feature type="transmembrane region" description="Helical" evidence="2">
    <location>
        <begin position="7"/>
        <end position="27"/>
    </location>
</feature>
<feature type="transmembrane region" description="Helical" evidence="2">
    <location>
        <begin position="822"/>
        <end position="842"/>
    </location>
</feature>
<feature type="transmembrane region" description="Helical" evidence="2">
    <location>
        <begin position="869"/>
        <end position="889"/>
    </location>
</feature>
<feature type="transmembrane region" description="Helical" evidence="2">
    <location>
        <begin position="903"/>
        <end position="923"/>
    </location>
</feature>
<feature type="transmembrane region" description="Helical" evidence="2">
    <location>
        <begin position="928"/>
        <end position="948"/>
    </location>
</feature>
<feature type="transmembrane region" description="Helical" evidence="2">
    <location>
        <begin position="979"/>
        <end position="999"/>
    </location>
</feature>
<feature type="region of interest" description="Disordered" evidence="3">
    <location>
        <begin position="680"/>
        <end position="707"/>
    </location>
</feature>
<feature type="compositionally biased region" description="Basic and acidic residues" evidence="3">
    <location>
        <begin position="680"/>
        <end position="697"/>
    </location>
</feature>
<reference key="1">
    <citation type="journal article" date="2006" name="Lancet">
        <title>Complete genome sequence of USA300, an epidemic clone of community-acquired meticillin-resistant Staphylococcus aureus.</title>
        <authorList>
            <person name="Diep B.A."/>
            <person name="Gill S.R."/>
            <person name="Chang R.F."/>
            <person name="Phan T.H."/>
            <person name="Chen J.H."/>
            <person name="Davidson M.G."/>
            <person name="Lin F."/>
            <person name="Lin J."/>
            <person name="Carleton H.A."/>
            <person name="Mongodin E.F."/>
            <person name="Sensabaugh G.F."/>
            <person name="Perdreau-Remington F."/>
        </authorList>
    </citation>
    <scope>NUCLEOTIDE SEQUENCE [LARGE SCALE GENOMIC DNA]</scope>
    <source>
        <strain>USA300</strain>
    </source>
</reference>
<reference key="2">
    <citation type="journal article" date="2017" name="J. Bacteriol.">
        <title>Isolation of a Membrane Protein Complex for Type VII Secretion in Staphylococcus aureus.</title>
        <authorList>
            <person name="Aly K.A."/>
            <person name="Anderson M."/>
            <person name="Ohr R.J."/>
            <person name="Missiakas D."/>
        </authorList>
    </citation>
    <scope>FUNCTION</scope>
    <scope>INTERACTION WITH ESSB</scope>
    <scope>DISRUPTION PHENOTYPE</scope>
    <source>
        <strain>USA300</strain>
    </source>
</reference>
<reference key="3">
    <citation type="journal article" date="2018" name="Arch. Microbiol.">
        <title>The transmembrane domain of the Staphylococcus aureus ESAT-6 component EssB mediates interaction with the integral membrane protein EsaA, facilitating partially regulated secretion in a heterologous host.</title>
        <authorList>
            <person name="Ahmed M.M."/>
            <person name="Aboshanab K.M."/>
            <person name="Ragab Y.M."/>
            <person name="Missiakas D.M."/>
            <person name="Aly K.A."/>
        </authorList>
    </citation>
    <scope>FUNCTION</scope>
    <scope>INTERACTION WITH ESSB</scope>
    <source>
        <strain>USA300</strain>
    </source>
</reference>
<keyword id="KW-1003">Cell membrane</keyword>
<keyword id="KW-0175">Coiled coil</keyword>
<keyword id="KW-0472">Membrane</keyword>
<keyword id="KW-0812">Transmembrane</keyword>
<keyword id="KW-1133">Transmembrane helix</keyword>
<keyword id="KW-0843">Virulence</keyword>
<comment type="function">
    <text evidence="4 5">Component of the type VII secretion system (Ess). Provides together with EssB and other components such as EssC and EssE a secretion plateform accross the cytoplasmic membrane in the host.</text>
</comment>
<comment type="subunit">
    <text evidence="1 4 5">Homodimer (By similarity). Interacts with EssB (PubMed:28874412, PubMed:29737367).</text>
</comment>
<comment type="subcellular location">
    <subcellularLocation>
        <location evidence="1">Cell membrane</location>
        <topology evidence="2">Multi-pass membrane protein</topology>
    </subcellularLocation>
</comment>
<comment type="disruption phenotype">
    <text evidence="4">Deletion abrogates the secretion of EsxA and EsxC into the extracellular medium.</text>
</comment>
<comment type="similarity">
    <text evidence="7">Belongs to the EsaA family.</text>
</comment>
<proteinExistence type="evidence at protein level"/>
<name>ESAA_STAA3</name>
<sequence length="1009" mass="114826">MKKKNWIYALIVTLIIIIAIVSMIFFVQTKYGDQSEKGSQSVSNKNNKIHIAIVNEDQPTTYNGKKVELGQAFIKRLANEKNYKFETVTRNVAESGLKNGGYQVMIVIPENFSKLAMQLDAKTPSKISLQYKTAVGQKEEVAKNTEKVVSNVLNDFNKNLVEIYLTSIIDNLHNAQKNVGAIMTREHGVNSKFSNYLLNPINDFPELFTDTLVNSISANKDITKWFQTYNKSLLSANSDTFRVNTDYNVSTLIEKQNSLFDEHNTAMDKMLQDYKSQKDSVELDNYINALKQMDSQIDQQSSMQDTGKEEYKQTVKENLDKLREIIQSQESPFSKGMIEDYRKQLTESLQDELANNKDLQDALNSIKMNNAQFAENLEKQLHDDIVKEPDTDTTFIYNMSKQDFIAAGLNEDEANKYEAIVKEAKRYKNEYNLKKPLAEHINLTDYDNQVAQDTSSLINDGVKVQRTETIKSNDINQLTVATDPHFNFEGDIKINGKKYDIKDQSVQLDTSNKEYKVEVNGVAKLKKDAEKDFLKDKTMHLQLLFGQANRQDEPNDKKATSVVDVTLNHNLDGRLSKDALSQQLSALSRFDAHYKMYTDTKGREDKPFDNKRLIDMMVDQVINDMESFKDDKVAVLHQIDSMEENSDKLIDDILNNKKNTTKNKEDISKLIDQLENVKKTFAEEPQEPKIDKGKNDEFNTMSSNLDKEISRISEKSTQLLSDTQESKSIADSVSGQLNQVDNNVNKLHATGRALGVRANDLNRQMAKNDKDNELFAKEFKKVLQNSKDGDRQNQALKAFMSNPVQKKNLENVLANNGNTDVISPTLFVLLMYLLSMITAYIFYSYERAKGQMNFIKDDYSSKNHLWNNVITSGVIGTTGLVEGLIVGLIAMNKFHVLAGYRAKFILMVILTMMVFVLINTYLLRQVKSIGMFLMIAALGLYFVAMNNLKAAGQGVTNKISPLSYIDNMFFNYLNAEHPIGLVLVILTVLVIIGFVLNMFIKHFKKERLI</sequence>